<comment type="function">
    <text evidence="2">Non-classical phosphatidylinositol (PtdIns) transfer protein (PITP), which exhibits PtdIns-binding/transfer activity in the absence of detectable PtdCho-binding/transfer activity. Regulates PtdIns(4,5)P2 homeostasis at the plasma membrane. Heme-binding protein that may play a role in organic oxidant-induced stress responses.</text>
</comment>
<comment type="catalytic activity">
    <reaction evidence="2">
        <text>a 1,2-diacyl-sn-glycero-3-phospho-(1D-myo-inositol)(in) = a 1,2-diacyl-sn-glycero-3-phospho-(1D-myo-inositol)(out)</text>
        <dbReference type="Rhea" id="RHEA:38691"/>
        <dbReference type="ChEBI" id="CHEBI:57880"/>
    </reaction>
    <physiologicalReaction direction="left-to-right" evidence="2">
        <dbReference type="Rhea" id="RHEA:38692"/>
    </physiologicalReaction>
</comment>
<comment type="cofactor">
    <cofactor evidence="1">
        <name>heme b</name>
        <dbReference type="ChEBI" id="CHEBI:60344"/>
    </cofactor>
</comment>
<comment type="subcellular location">
    <subcellularLocation>
        <location evidence="2">Cytoplasm</location>
    </subcellularLocation>
    <subcellularLocation>
        <location evidence="2">Endoplasmic reticulum membrane</location>
        <topology evidence="2">Peripheral membrane protein</topology>
    </subcellularLocation>
    <subcellularLocation>
        <location evidence="2">Microsome membrane</location>
        <topology evidence="2">Peripheral membrane protein</topology>
    </subcellularLocation>
</comment>
<comment type="similarity">
    <text evidence="5">Belongs to the SFH5 family.</text>
</comment>
<reference key="1">
    <citation type="journal article" date="2007" name="Nat. Biotechnol.">
        <title>Genome sequencing and analysis of the versatile cell factory Aspergillus niger CBS 513.88.</title>
        <authorList>
            <person name="Pel H.J."/>
            <person name="de Winde J.H."/>
            <person name="Archer D.B."/>
            <person name="Dyer P.S."/>
            <person name="Hofmann G."/>
            <person name="Schaap P.J."/>
            <person name="Turner G."/>
            <person name="de Vries R.P."/>
            <person name="Albang R."/>
            <person name="Albermann K."/>
            <person name="Andersen M.R."/>
            <person name="Bendtsen J.D."/>
            <person name="Benen J.A.E."/>
            <person name="van den Berg M."/>
            <person name="Breestraat S."/>
            <person name="Caddick M.X."/>
            <person name="Contreras R."/>
            <person name="Cornell M."/>
            <person name="Coutinho P.M."/>
            <person name="Danchin E.G.J."/>
            <person name="Debets A.J.M."/>
            <person name="Dekker P."/>
            <person name="van Dijck P.W.M."/>
            <person name="van Dijk A."/>
            <person name="Dijkhuizen L."/>
            <person name="Driessen A.J.M."/>
            <person name="d'Enfert C."/>
            <person name="Geysens S."/>
            <person name="Goosen C."/>
            <person name="Groot G.S.P."/>
            <person name="de Groot P.W.J."/>
            <person name="Guillemette T."/>
            <person name="Henrissat B."/>
            <person name="Herweijer M."/>
            <person name="van den Hombergh J.P.T.W."/>
            <person name="van den Hondel C.A.M.J.J."/>
            <person name="van der Heijden R.T.J.M."/>
            <person name="van der Kaaij R.M."/>
            <person name="Klis F.M."/>
            <person name="Kools H.J."/>
            <person name="Kubicek C.P."/>
            <person name="van Kuyk P.A."/>
            <person name="Lauber J."/>
            <person name="Lu X."/>
            <person name="van der Maarel M.J.E.C."/>
            <person name="Meulenberg R."/>
            <person name="Menke H."/>
            <person name="Mortimer M.A."/>
            <person name="Nielsen J."/>
            <person name="Oliver S.G."/>
            <person name="Olsthoorn M."/>
            <person name="Pal K."/>
            <person name="van Peij N.N.M.E."/>
            <person name="Ram A.F.J."/>
            <person name="Rinas U."/>
            <person name="Roubos J.A."/>
            <person name="Sagt C.M.J."/>
            <person name="Schmoll M."/>
            <person name="Sun J."/>
            <person name="Ussery D."/>
            <person name="Varga J."/>
            <person name="Vervecken W."/>
            <person name="van de Vondervoort P.J.J."/>
            <person name="Wedler H."/>
            <person name="Woesten H.A.B."/>
            <person name="Zeng A.-P."/>
            <person name="van Ooyen A.J.J."/>
            <person name="Visser J."/>
            <person name="Stam H."/>
        </authorList>
    </citation>
    <scope>NUCLEOTIDE SEQUENCE [LARGE SCALE GENOMIC DNA]</scope>
    <source>
        <strain>ATCC MYA-4892 / CBS 513.88 / FGSC A1513</strain>
    </source>
</reference>
<evidence type="ECO:0000250" key="1">
    <source>
        <dbReference type="UniProtKB" id="A6ZQI5"/>
    </source>
</evidence>
<evidence type="ECO:0000250" key="2">
    <source>
        <dbReference type="UniProtKB" id="P47008"/>
    </source>
</evidence>
<evidence type="ECO:0000255" key="3">
    <source>
        <dbReference type="PROSITE-ProRule" id="PRU00056"/>
    </source>
</evidence>
<evidence type="ECO:0000256" key="4">
    <source>
        <dbReference type="SAM" id="MobiDB-lite"/>
    </source>
</evidence>
<evidence type="ECO:0000305" key="5"/>
<organism>
    <name type="scientific">Aspergillus niger (strain ATCC MYA-4892 / CBS 513.88 / FGSC A1513)</name>
    <dbReference type="NCBI Taxonomy" id="425011"/>
    <lineage>
        <taxon>Eukaryota</taxon>
        <taxon>Fungi</taxon>
        <taxon>Dikarya</taxon>
        <taxon>Ascomycota</taxon>
        <taxon>Pezizomycotina</taxon>
        <taxon>Eurotiomycetes</taxon>
        <taxon>Eurotiomycetidae</taxon>
        <taxon>Eurotiales</taxon>
        <taxon>Aspergillaceae</taxon>
        <taxon>Aspergillus</taxon>
        <taxon>Aspergillus subgen. Circumdati</taxon>
    </lineage>
</organism>
<keyword id="KW-0963">Cytoplasm</keyword>
<keyword id="KW-0256">Endoplasmic reticulum</keyword>
<keyword id="KW-0349">Heme</keyword>
<keyword id="KW-0408">Iron</keyword>
<keyword id="KW-0445">Lipid transport</keyword>
<keyword id="KW-0472">Membrane</keyword>
<keyword id="KW-0479">Metal-binding</keyword>
<keyword id="KW-0492">Microsome</keyword>
<keyword id="KW-1185">Reference proteome</keyword>
<keyword id="KW-0813">Transport</keyword>
<sequence length="477" mass="52382">MADQPEKTAAAPAAPEAQPPTTATTTTEPAVSESQTQPEPQPEAEQKVEQATTGEEASPAPAATEPPVTEPTPAPAQEAPEDKKEEAPKEETKETKAEESKEEQKAEEPAAEPKAEAAKEEEQKPAQPEYLAKNPALSQFFDRLSAILSSTGHNEMWGVTLKDSSDVPTVNILIKFLRANEGNVKLAEEQLTKALQWRKEMNPLALTEGRYSAERYGGLGYVTKYPEANGKETIVTWNVYGNVKSIDQTFGDVDGFIKWRVALMELAVKDLKLSEATTVIDYDGEDPYQMLQVHDYQNVSFLRLNPTIKAASKKTIEVFSMAYPELLREKFFVNVPAIMGWMFAAMKVFLSKNTTRKFHPISNGANLAREFPSLKDKFPKTYGGNGATLEEDAFTVNLEKAEPAPEAPKEEPKEESKQEQAEAPKEEAKAEQAEAPKEEVKEEAKEEAKTEQPAAEEPAKAEAAVTTQEAPAAAEAK</sequence>
<gene>
    <name type="primary">sfh5</name>
    <name type="ORF">An09g06480</name>
</gene>
<proteinExistence type="inferred from homology"/>
<name>SFH5_ASPNC</name>
<protein>
    <recommendedName>
        <fullName>Phosphatidylinositol transfer protein sfh5</fullName>
        <shortName>PITP sfh5</shortName>
    </recommendedName>
</protein>
<dbReference type="EMBL" id="AM270211">
    <property type="protein sequence ID" value="CAK40441.1"/>
    <property type="molecule type" value="Genomic_DNA"/>
</dbReference>
<dbReference type="RefSeq" id="XP_001393963.1">
    <property type="nucleotide sequence ID" value="XM_001393926.2"/>
</dbReference>
<dbReference type="SMR" id="A2QUR1"/>
<dbReference type="EnsemblFungi" id="CAK40441">
    <property type="protein sequence ID" value="CAK40441"/>
    <property type="gene ID" value="An09g06480"/>
</dbReference>
<dbReference type="GeneID" id="4984185"/>
<dbReference type="KEGG" id="ang:An09g06480"/>
<dbReference type="HOGENOM" id="CLU_045138_1_0_1"/>
<dbReference type="Proteomes" id="UP000006706">
    <property type="component" value="Chromosome 1L"/>
</dbReference>
<dbReference type="GO" id="GO:0032541">
    <property type="term" value="C:cortical endoplasmic reticulum"/>
    <property type="evidence" value="ECO:0007669"/>
    <property type="project" value="TreeGrafter"/>
</dbReference>
<dbReference type="GO" id="GO:0005829">
    <property type="term" value="C:cytosol"/>
    <property type="evidence" value="ECO:0007669"/>
    <property type="project" value="TreeGrafter"/>
</dbReference>
<dbReference type="GO" id="GO:0005789">
    <property type="term" value="C:endoplasmic reticulum membrane"/>
    <property type="evidence" value="ECO:0007669"/>
    <property type="project" value="UniProtKB-SubCell"/>
</dbReference>
<dbReference type="GO" id="GO:0005886">
    <property type="term" value="C:plasma membrane"/>
    <property type="evidence" value="ECO:0007669"/>
    <property type="project" value="TreeGrafter"/>
</dbReference>
<dbReference type="GO" id="GO:0046872">
    <property type="term" value="F:metal ion binding"/>
    <property type="evidence" value="ECO:0007669"/>
    <property type="project" value="UniProtKB-KW"/>
</dbReference>
<dbReference type="GO" id="GO:0008526">
    <property type="term" value="F:phosphatidylinositol transfer activity"/>
    <property type="evidence" value="ECO:0007669"/>
    <property type="project" value="InterPro"/>
</dbReference>
<dbReference type="GO" id="GO:0043001">
    <property type="term" value="P:Golgi to plasma membrane protein transport"/>
    <property type="evidence" value="ECO:0007669"/>
    <property type="project" value="TreeGrafter"/>
</dbReference>
<dbReference type="GO" id="GO:0017157">
    <property type="term" value="P:regulation of exocytosis"/>
    <property type="evidence" value="ECO:0007669"/>
    <property type="project" value="TreeGrafter"/>
</dbReference>
<dbReference type="CDD" id="cd00170">
    <property type="entry name" value="SEC14"/>
    <property type="match status" value="1"/>
</dbReference>
<dbReference type="FunFam" id="3.40.525.10:FF:000017">
    <property type="entry name" value="Phosphatidylinositol transfer protein sfh5"/>
    <property type="match status" value="1"/>
</dbReference>
<dbReference type="Gene3D" id="3.40.525.10">
    <property type="entry name" value="CRAL-TRIO lipid binding domain"/>
    <property type="match status" value="1"/>
</dbReference>
<dbReference type="InterPro" id="IPR001251">
    <property type="entry name" value="CRAL-TRIO_dom"/>
</dbReference>
<dbReference type="InterPro" id="IPR036865">
    <property type="entry name" value="CRAL-TRIO_dom_sf"/>
</dbReference>
<dbReference type="InterPro" id="IPR011074">
    <property type="entry name" value="CRAL/TRIO_N_dom"/>
</dbReference>
<dbReference type="InterPro" id="IPR036273">
    <property type="entry name" value="CRAL/TRIO_N_dom_sf"/>
</dbReference>
<dbReference type="InterPro" id="IPR042938">
    <property type="entry name" value="Sfh5"/>
</dbReference>
<dbReference type="PANTHER" id="PTHR47669">
    <property type="entry name" value="PHOSPHATIDYLINOSITOL TRANSFER PROTEIN SFH5"/>
    <property type="match status" value="1"/>
</dbReference>
<dbReference type="PANTHER" id="PTHR47669:SF1">
    <property type="entry name" value="PHOSPHATIDYLINOSITOL TRANSFER PROTEIN SFH5"/>
    <property type="match status" value="1"/>
</dbReference>
<dbReference type="Pfam" id="PF00650">
    <property type="entry name" value="CRAL_TRIO"/>
    <property type="match status" value="1"/>
</dbReference>
<dbReference type="Pfam" id="PF03765">
    <property type="entry name" value="CRAL_TRIO_N"/>
    <property type="match status" value="1"/>
</dbReference>
<dbReference type="SMART" id="SM00516">
    <property type="entry name" value="SEC14"/>
    <property type="match status" value="1"/>
</dbReference>
<dbReference type="SUPFAM" id="SSF52087">
    <property type="entry name" value="CRAL/TRIO domain"/>
    <property type="match status" value="1"/>
</dbReference>
<dbReference type="SUPFAM" id="SSF46938">
    <property type="entry name" value="CRAL/TRIO N-terminal domain"/>
    <property type="match status" value="1"/>
</dbReference>
<dbReference type="PROSITE" id="PS50191">
    <property type="entry name" value="CRAL_TRIO"/>
    <property type="match status" value="1"/>
</dbReference>
<feature type="chain" id="PRO_0000324969" description="Phosphatidylinositol transfer protein sfh5">
    <location>
        <begin position="1"/>
        <end position="477"/>
    </location>
</feature>
<feature type="domain" description="CRAL-TRIO" evidence="3">
    <location>
        <begin position="215"/>
        <end position="390"/>
    </location>
</feature>
<feature type="region of interest" description="Disordered" evidence="4">
    <location>
        <begin position="1"/>
        <end position="127"/>
    </location>
</feature>
<feature type="region of interest" description="Disordered" evidence="4">
    <location>
        <begin position="402"/>
        <end position="477"/>
    </location>
</feature>
<feature type="compositionally biased region" description="Low complexity" evidence="4">
    <location>
        <begin position="7"/>
        <end position="38"/>
    </location>
</feature>
<feature type="compositionally biased region" description="Low complexity" evidence="4">
    <location>
        <begin position="49"/>
        <end position="67"/>
    </location>
</feature>
<feature type="compositionally biased region" description="Basic and acidic residues" evidence="4">
    <location>
        <begin position="80"/>
        <end position="124"/>
    </location>
</feature>
<feature type="compositionally biased region" description="Basic and acidic residues" evidence="4">
    <location>
        <begin position="402"/>
        <end position="450"/>
    </location>
</feature>
<feature type="compositionally biased region" description="Low complexity" evidence="4">
    <location>
        <begin position="451"/>
        <end position="477"/>
    </location>
</feature>
<feature type="binding site" evidence="1">
    <location>
        <position position="240"/>
    </location>
    <ligand>
        <name>heme</name>
        <dbReference type="ChEBI" id="CHEBI:30413"/>
    </ligand>
</feature>
<feature type="binding site" evidence="1">
    <location>
        <position position="260"/>
    </location>
    <ligand>
        <name>heme</name>
        <dbReference type="ChEBI" id="CHEBI:30413"/>
    </ligand>
</feature>
<feature type="binding site" evidence="1">
    <location>
        <position position="294"/>
    </location>
    <ligand>
        <name>heme</name>
        <dbReference type="ChEBI" id="CHEBI:30413"/>
    </ligand>
</feature>
<feature type="binding site" description="proximal binding residue" evidence="1">
    <location>
        <position position="296"/>
    </location>
    <ligand>
        <name>heme</name>
        <dbReference type="ChEBI" id="CHEBI:30413"/>
    </ligand>
    <ligandPart>
        <name>Fe</name>
        <dbReference type="ChEBI" id="CHEBI:18248"/>
    </ligandPart>
</feature>
<feature type="binding site" evidence="1">
    <location>
        <position position="330"/>
    </location>
    <ligand>
        <name>heme</name>
        <dbReference type="ChEBI" id="CHEBI:30413"/>
    </ligand>
</feature>
<accession>A2QUR1</accession>